<feature type="chain" id="PRO_0000236811" description="Cannabinoid receptor 1">
    <location>
        <begin position="1"/>
        <end position="470"/>
    </location>
</feature>
<feature type="topological domain" description="Extracellular" evidence="2">
    <location>
        <begin position="1"/>
        <end position="121"/>
    </location>
</feature>
<feature type="transmembrane region" description="Helical; Name=1" evidence="2">
    <location>
        <begin position="122"/>
        <end position="142"/>
    </location>
</feature>
<feature type="topological domain" description="Cytoplasmic" evidence="2">
    <location>
        <begin position="143"/>
        <end position="154"/>
    </location>
</feature>
<feature type="transmembrane region" description="Helical; Name=2" evidence="2">
    <location>
        <begin position="155"/>
        <end position="175"/>
    </location>
</feature>
<feature type="topological domain" description="Extracellular" evidence="2">
    <location>
        <begin position="176"/>
        <end position="187"/>
    </location>
</feature>
<feature type="transmembrane region" description="Helical; Name=3" evidence="2">
    <location>
        <begin position="188"/>
        <end position="208"/>
    </location>
</feature>
<feature type="topological domain" description="Cytoplasmic" evidence="2">
    <location>
        <begin position="209"/>
        <end position="232"/>
    </location>
</feature>
<feature type="transmembrane region" description="Helical; Name=4" evidence="2">
    <location>
        <begin position="233"/>
        <end position="253"/>
    </location>
</feature>
<feature type="topological domain" description="Extracellular" evidence="2">
    <location>
        <begin position="254"/>
        <end position="277"/>
    </location>
</feature>
<feature type="transmembrane region" description="Helical; Name=5" evidence="2">
    <location>
        <begin position="278"/>
        <end position="298"/>
    </location>
</feature>
<feature type="topological domain" description="Cytoplasmic" evidence="2">
    <location>
        <begin position="299"/>
        <end position="344"/>
    </location>
</feature>
<feature type="transmembrane region" description="Helical; Name=6" evidence="2">
    <location>
        <begin position="345"/>
        <end position="365"/>
    </location>
</feature>
<feature type="topological domain" description="Extracellular" evidence="2">
    <location>
        <begin position="366"/>
        <end position="377"/>
    </location>
</feature>
<feature type="transmembrane region" description="Helical; Name=7" evidence="2">
    <location>
        <begin position="378"/>
        <end position="398"/>
    </location>
</feature>
<feature type="topological domain" description="Cytoplasmic" evidence="2">
    <location>
        <begin position="399"/>
        <end position="470"/>
    </location>
</feature>
<feature type="region of interest" description="Required for mitochondrial localization" evidence="3">
    <location>
        <begin position="2"/>
        <end position="23"/>
    </location>
</feature>
<feature type="lipid moiety-binding region" description="S-palmitoyl cysteine" evidence="2">
    <location>
        <position position="415"/>
    </location>
</feature>
<feature type="glycosylation site" description="N-linked (GlcNAc...) asparagine" evidence="4">
    <location>
        <position position="78"/>
    </location>
</feature>
<feature type="glycosylation site" description="N-linked (GlcNAc...) asparagine" evidence="4">
    <location>
        <position position="84"/>
    </location>
</feature>
<feature type="glycosylation site" description="N-linked (GlcNAc...) asparagine" evidence="4">
    <location>
        <position position="372"/>
    </location>
</feature>
<organism>
    <name type="scientific">Xenopus laevis</name>
    <name type="common">African clawed frog</name>
    <dbReference type="NCBI Taxonomy" id="8355"/>
    <lineage>
        <taxon>Eukaryota</taxon>
        <taxon>Metazoa</taxon>
        <taxon>Chordata</taxon>
        <taxon>Craniata</taxon>
        <taxon>Vertebrata</taxon>
        <taxon>Euteleostomi</taxon>
        <taxon>Amphibia</taxon>
        <taxon>Batrachia</taxon>
        <taxon>Anura</taxon>
        <taxon>Pipoidea</taxon>
        <taxon>Pipidae</taxon>
        <taxon>Xenopodinae</taxon>
        <taxon>Xenopus</taxon>
        <taxon>Xenopus</taxon>
    </lineage>
</organism>
<evidence type="ECO:0000250" key="1">
    <source>
        <dbReference type="UniProtKB" id="P20272"/>
    </source>
</evidence>
<evidence type="ECO:0000250" key="2">
    <source>
        <dbReference type="UniProtKB" id="P21554"/>
    </source>
</evidence>
<evidence type="ECO:0000250" key="3">
    <source>
        <dbReference type="UniProtKB" id="P47746"/>
    </source>
</evidence>
<evidence type="ECO:0000255" key="4"/>
<evidence type="ECO:0000255" key="5">
    <source>
        <dbReference type="PROSITE-ProRule" id="PRU00521"/>
    </source>
</evidence>
<evidence type="ECO:0000269" key="6">
    <source>
    </source>
</evidence>
<reference key="1">
    <citation type="journal article" date="2003" name="J. Comp. Neurol.">
        <title>Xenopus laevis CB1 cannabinoid receptor: molecular cloning and mRNA distribution in the central nervous system.</title>
        <authorList>
            <person name="Cottone E."/>
            <person name="Salio C."/>
            <person name="Conrath M."/>
            <person name="Franzoni M.F."/>
        </authorList>
    </citation>
    <scope>NUCLEOTIDE SEQUENCE [MRNA]</scope>
    <scope>TISSUE SPECIFICITY</scope>
</reference>
<proteinExistence type="evidence at transcript level"/>
<gene>
    <name type="primary">cnr1</name>
</gene>
<comment type="function">
    <text evidence="2 3">G-protein coupled receptor for cannabinoids (By similarity). Mediates many cannabinoid-induced effects in the central nervous system (CNS), as well as in peripheral tissues (By similarity). Regulates cellular respiration and energy production in response to cannabinoids (By similarity). Signaling typically involves reduction in cyclic AMP (By similarity).</text>
</comment>
<comment type="subcellular location">
    <subcellularLocation>
        <location evidence="3">Cell membrane</location>
        <topology evidence="2">Multi-pass membrane protein</topology>
    </subcellularLocation>
    <subcellularLocation>
        <location evidence="3">Mitochondrion outer membrane</location>
    </subcellularLocation>
    <subcellularLocation>
        <location evidence="1">Cell projection</location>
        <location evidence="1">Axon</location>
    </subcellularLocation>
    <subcellularLocation>
        <location evidence="1">Presynapse</location>
    </subcellularLocation>
    <text evidence="3">Unexpectedly, in the mitochondria, the C-terminus is located in the mitochondrial intermembrane space, a compartment topologically considered as extracellular. In canonical seven-transmembrane G-protein coupled receptors, the C-terminus is cytosolic.</text>
</comment>
<comment type="tissue specificity">
    <text evidence="6">Expressed in neurons, especially in the olfactory bulbs, telencephalic pallium, and hypothalamus and also in the midbrain and hindbrain (in the mesencephalic tegmentum and dorsolateral rhombencephalon). Expressed also in the spinal cord.</text>
</comment>
<comment type="PTM">
    <text evidence="2">Palmitoylation at Cys-415 is important for recruitment at both plasma membrane and lipid rafts and association with G protein alpha subunits.</text>
</comment>
<comment type="similarity">
    <text evidence="5">Belongs to the G-protein coupled receptor 1 family.</text>
</comment>
<keyword id="KW-1003">Cell membrane</keyword>
<keyword id="KW-0966">Cell projection</keyword>
<keyword id="KW-0297">G-protein coupled receptor</keyword>
<keyword id="KW-0325">Glycoprotein</keyword>
<keyword id="KW-0449">Lipoprotein</keyword>
<keyword id="KW-0472">Membrane</keyword>
<keyword id="KW-0496">Mitochondrion</keyword>
<keyword id="KW-1000">Mitochondrion outer membrane</keyword>
<keyword id="KW-0564">Palmitate</keyword>
<keyword id="KW-0675">Receptor</keyword>
<keyword id="KW-1185">Reference proteome</keyword>
<keyword id="KW-0770">Synapse</keyword>
<keyword id="KW-0807">Transducer</keyword>
<keyword id="KW-0812">Transmembrane</keyword>
<keyword id="KW-1133">Transmembrane helix</keyword>
<accession>Q801M1</accession>
<sequence length="470" mass="52778">MKSILDGLADTTFRTITTDLLYLGPNEVQYDDSKGDISSKLVYFPQKLPLSSLRGDPLHEKMTIIDDPLLSIPLDQINATDFYNKSIIFKDTDDNVQCGKNFMDMECFMILTPSQQLVIAALSIILGTFTVLENMLVLVVIVQSRSLRCRPSYHFIGSLAVADLLGSVIFVYSFVDFHVFHRKDSPNVFLFKLGGVTASFTASVGSLFLTAIDRYISIHRPMSYKRIVTRTKAVIAFCMMWTIAIVIAVLPLFGWNCIKLRSVCSDIFPLIDETYLMFWIGVTSVLLLFIVYAYMYILWKAHNHAVRMLQRGTQKSIIVHTSEDGKVHITRPDQTRMDIRLAKTLVLILVVLIICWGPLMAIMVYDVFGKINKTIKTVFAFCSVLCLLNSTVNPIIYALRSKDLRNAFCSMFPSCQGTAQPLDNSMESDCQNRHVNNSNAHRAAESCIKSTVKIAKVTMSVSTDTSAEAV</sequence>
<name>CNR1_XENLA</name>
<dbReference type="EMBL" id="AY098532">
    <property type="protein sequence ID" value="AAM28314.1"/>
    <property type="molecule type" value="mRNA"/>
</dbReference>
<dbReference type="RefSeq" id="NP_001079173.1">
    <property type="nucleotide sequence ID" value="NM_001085704.1"/>
</dbReference>
<dbReference type="SMR" id="Q801M1"/>
<dbReference type="GlyCosmos" id="Q801M1">
    <property type="glycosylation" value="3 sites, No reported glycans"/>
</dbReference>
<dbReference type="GeneID" id="373759"/>
<dbReference type="KEGG" id="xla:373759"/>
<dbReference type="AGR" id="Xenbase:XB-GENE-962202"/>
<dbReference type="CTD" id="373759"/>
<dbReference type="Xenbase" id="XB-GENE-962202">
    <property type="gene designation" value="cnr1.S"/>
</dbReference>
<dbReference type="OMA" id="HKHANSA"/>
<dbReference type="OrthoDB" id="5966748at2759"/>
<dbReference type="Proteomes" id="UP000186698">
    <property type="component" value="Chromosome 5S"/>
</dbReference>
<dbReference type="Bgee" id="373759">
    <property type="expression patterns" value="Expressed in brain"/>
</dbReference>
<dbReference type="GO" id="GO:0030424">
    <property type="term" value="C:axon"/>
    <property type="evidence" value="ECO:0007669"/>
    <property type="project" value="UniProtKB-SubCell"/>
</dbReference>
<dbReference type="GO" id="GO:0005737">
    <property type="term" value="C:cytoplasm"/>
    <property type="evidence" value="ECO:0000318"/>
    <property type="project" value="GO_Central"/>
</dbReference>
<dbReference type="GO" id="GO:0005741">
    <property type="term" value="C:mitochondrial outer membrane"/>
    <property type="evidence" value="ECO:0007669"/>
    <property type="project" value="UniProtKB-SubCell"/>
</dbReference>
<dbReference type="GO" id="GO:0005886">
    <property type="term" value="C:plasma membrane"/>
    <property type="evidence" value="ECO:0000318"/>
    <property type="project" value="GO_Central"/>
</dbReference>
<dbReference type="GO" id="GO:0098793">
    <property type="term" value="C:presynapse"/>
    <property type="evidence" value="ECO:0007669"/>
    <property type="project" value="UniProtKB-SubCell"/>
</dbReference>
<dbReference type="GO" id="GO:0004949">
    <property type="term" value="F:cannabinoid receptor activity"/>
    <property type="evidence" value="ECO:0000250"/>
    <property type="project" value="UniProtKB"/>
</dbReference>
<dbReference type="GO" id="GO:0004930">
    <property type="term" value="F:G protein-coupled receptor activity"/>
    <property type="evidence" value="ECO:0000318"/>
    <property type="project" value="GO_Central"/>
</dbReference>
<dbReference type="GO" id="GO:0007189">
    <property type="term" value="P:adenylate cyclase-activating G protein-coupled receptor signaling pathway"/>
    <property type="evidence" value="ECO:0000318"/>
    <property type="project" value="GO_Central"/>
</dbReference>
<dbReference type="GO" id="GO:0019222">
    <property type="term" value="P:regulation of metabolic process"/>
    <property type="evidence" value="ECO:0000318"/>
    <property type="project" value="GO_Central"/>
</dbReference>
<dbReference type="CDD" id="cd15340">
    <property type="entry name" value="7tmA_CB1"/>
    <property type="match status" value="1"/>
</dbReference>
<dbReference type="FunFam" id="1.20.1070.10:FF:000072">
    <property type="entry name" value="Cannabinoid receptor 1"/>
    <property type="match status" value="1"/>
</dbReference>
<dbReference type="Gene3D" id="1.20.1070.10">
    <property type="entry name" value="Rhodopsin 7-helix transmembrane proteins"/>
    <property type="match status" value="1"/>
</dbReference>
<dbReference type="InterPro" id="IPR000810">
    <property type="entry name" value="Canbinoid_rcpt_1"/>
</dbReference>
<dbReference type="InterPro" id="IPR002230">
    <property type="entry name" value="Cnbnoid_rcpt"/>
</dbReference>
<dbReference type="InterPro" id="IPR000276">
    <property type="entry name" value="GPCR_Rhodpsn"/>
</dbReference>
<dbReference type="InterPro" id="IPR017452">
    <property type="entry name" value="GPCR_Rhodpsn_7TM"/>
</dbReference>
<dbReference type="PANTHER" id="PTHR22750">
    <property type="entry name" value="G-PROTEIN COUPLED RECEPTOR"/>
    <property type="match status" value="1"/>
</dbReference>
<dbReference type="Pfam" id="PF00001">
    <property type="entry name" value="7tm_1"/>
    <property type="match status" value="1"/>
</dbReference>
<dbReference type="PIRSF" id="PIRSF037995">
    <property type="entry name" value="Cnoid_rcpt_1"/>
    <property type="match status" value="1"/>
</dbReference>
<dbReference type="PRINTS" id="PR00522">
    <property type="entry name" value="CANABINOID1R"/>
</dbReference>
<dbReference type="PRINTS" id="PR00362">
    <property type="entry name" value="CANNABINOIDR"/>
</dbReference>
<dbReference type="PRINTS" id="PR00237">
    <property type="entry name" value="GPCRRHODOPSN"/>
</dbReference>
<dbReference type="SMART" id="SM01381">
    <property type="entry name" value="7TM_GPCR_Srsx"/>
    <property type="match status" value="1"/>
</dbReference>
<dbReference type="SUPFAM" id="SSF81321">
    <property type="entry name" value="Family A G protein-coupled receptor-like"/>
    <property type="match status" value="1"/>
</dbReference>
<dbReference type="PROSITE" id="PS00237">
    <property type="entry name" value="G_PROTEIN_RECEP_F1_1"/>
    <property type="match status" value="1"/>
</dbReference>
<dbReference type="PROSITE" id="PS50262">
    <property type="entry name" value="G_PROTEIN_RECEP_F1_2"/>
    <property type="match status" value="1"/>
</dbReference>
<protein>
    <recommendedName>
        <fullName>Cannabinoid receptor 1</fullName>
        <shortName>CB-R</shortName>
        <shortName>CB1</shortName>
    </recommendedName>
</protein>